<protein>
    <recommendedName>
        <fullName evidence="1">Cobalt-precorrin-5B C(1)-methyltransferase</fullName>
        <ecNumber evidence="1">2.1.1.195</ecNumber>
    </recommendedName>
    <alternativeName>
        <fullName evidence="1">Cobalt-precorrin-6A synthase</fullName>
    </alternativeName>
</protein>
<reference key="1">
    <citation type="journal article" date="1996" name="DNA Res.">
        <title>Sequence analysis of the genome of the unicellular cyanobacterium Synechocystis sp. strain PCC6803. II. Sequence determination of the entire genome and assignment of potential protein-coding regions.</title>
        <authorList>
            <person name="Kaneko T."/>
            <person name="Sato S."/>
            <person name="Kotani H."/>
            <person name="Tanaka A."/>
            <person name="Asamizu E."/>
            <person name="Nakamura Y."/>
            <person name="Miyajima N."/>
            <person name="Hirosawa M."/>
            <person name="Sugiura M."/>
            <person name="Sasamoto S."/>
            <person name="Kimura T."/>
            <person name="Hosouchi T."/>
            <person name="Matsuno A."/>
            <person name="Muraki A."/>
            <person name="Nakazaki N."/>
            <person name="Naruo K."/>
            <person name="Okumura S."/>
            <person name="Shimpo S."/>
            <person name="Takeuchi C."/>
            <person name="Wada T."/>
            <person name="Watanabe A."/>
            <person name="Yamada M."/>
            <person name="Yasuda M."/>
            <person name="Tabata S."/>
        </authorList>
    </citation>
    <scope>NUCLEOTIDE SEQUENCE [LARGE SCALE GENOMIC DNA]</scope>
    <source>
        <strain>ATCC 27184 / PCC 6803 / Kazusa</strain>
    </source>
</reference>
<comment type="function">
    <text evidence="1">Catalyzes the methylation of C-1 in cobalt-precorrin-5B to form cobalt-precorrin-6A.</text>
</comment>
<comment type="catalytic activity">
    <reaction evidence="1">
        <text>Co-precorrin-5B + S-adenosyl-L-methionine = Co-precorrin-6A + S-adenosyl-L-homocysteine</text>
        <dbReference type="Rhea" id="RHEA:26285"/>
        <dbReference type="ChEBI" id="CHEBI:57856"/>
        <dbReference type="ChEBI" id="CHEBI:59789"/>
        <dbReference type="ChEBI" id="CHEBI:60063"/>
        <dbReference type="ChEBI" id="CHEBI:60064"/>
        <dbReference type="EC" id="2.1.1.195"/>
    </reaction>
</comment>
<comment type="pathway">
    <text evidence="1">Cofactor biosynthesis; adenosylcobalamin biosynthesis; cob(II)yrinate a,c-diamide from sirohydrochlorin (anaerobic route): step 6/10.</text>
</comment>
<comment type="similarity">
    <text evidence="1">Belongs to the CbiD family.</text>
</comment>
<comment type="sequence caution" evidence="2">
    <conflict type="erroneous initiation">
        <sequence resource="EMBL-CDS" id="BAA17463"/>
    </conflict>
</comment>
<feature type="chain" id="PRO_0000141687" description="Cobalt-precorrin-5B C(1)-methyltransferase">
    <location>
        <begin position="1"/>
        <end position="378"/>
    </location>
</feature>
<dbReference type="EC" id="2.1.1.195" evidence="1"/>
<dbReference type="EMBL" id="BA000022">
    <property type="protein sequence ID" value="BAA17463.1"/>
    <property type="status" value="ALT_INIT"/>
    <property type="molecule type" value="Genomic_DNA"/>
</dbReference>
<dbReference type="PIR" id="S77360">
    <property type="entry name" value="S77360"/>
</dbReference>
<dbReference type="SMR" id="P73423"/>
<dbReference type="IntAct" id="P73423">
    <property type="interactions" value="1"/>
</dbReference>
<dbReference type="STRING" id="1148.gene:10498327"/>
<dbReference type="PaxDb" id="1148-1652542"/>
<dbReference type="EnsemblBacteria" id="BAA17463">
    <property type="protein sequence ID" value="BAA17463"/>
    <property type="gene ID" value="BAA17463"/>
</dbReference>
<dbReference type="KEGG" id="syn:slr1538"/>
<dbReference type="eggNOG" id="COG1903">
    <property type="taxonomic scope" value="Bacteria"/>
</dbReference>
<dbReference type="InParanoid" id="P73423"/>
<dbReference type="PhylomeDB" id="P73423"/>
<dbReference type="UniPathway" id="UPA00148">
    <property type="reaction ID" value="UER00227"/>
</dbReference>
<dbReference type="Proteomes" id="UP000001425">
    <property type="component" value="Chromosome"/>
</dbReference>
<dbReference type="GO" id="GO:0043780">
    <property type="term" value="F:cobalt-precorrin-5B C1-methyltransferase activity"/>
    <property type="evidence" value="ECO:0007669"/>
    <property type="project" value="RHEA"/>
</dbReference>
<dbReference type="GO" id="GO:0019251">
    <property type="term" value="P:anaerobic cobalamin biosynthetic process"/>
    <property type="evidence" value="ECO:0007669"/>
    <property type="project" value="UniProtKB-UniRule"/>
</dbReference>
<dbReference type="GO" id="GO:0032259">
    <property type="term" value="P:methylation"/>
    <property type="evidence" value="ECO:0007669"/>
    <property type="project" value="UniProtKB-KW"/>
</dbReference>
<dbReference type="Gene3D" id="3.30.2110.10">
    <property type="entry name" value="CbiD-like"/>
    <property type="match status" value="1"/>
</dbReference>
<dbReference type="HAMAP" id="MF_00787">
    <property type="entry name" value="CbiD"/>
    <property type="match status" value="1"/>
</dbReference>
<dbReference type="InterPro" id="IPR002748">
    <property type="entry name" value="CbiD"/>
</dbReference>
<dbReference type="InterPro" id="IPR036074">
    <property type="entry name" value="CbiD_sf"/>
</dbReference>
<dbReference type="NCBIfam" id="TIGR00312">
    <property type="entry name" value="cbiD"/>
    <property type="match status" value="1"/>
</dbReference>
<dbReference type="PANTHER" id="PTHR35863">
    <property type="entry name" value="COBALT-PRECORRIN-5B C(1)-METHYLTRANSFERASE"/>
    <property type="match status" value="1"/>
</dbReference>
<dbReference type="PANTHER" id="PTHR35863:SF1">
    <property type="entry name" value="COBALT-PRECORRIN-5B C(1)-METHYLTRANSFERASE"/>
    <property type="match status" value="1"/>
</dbReference>
<dbReference type="Pfam" id="PF01888">
    <property type="entry name" value="CbiD"/>
    <property type="match status" value="1"/>
</dbReference>
<dbReference type="PIRSF" id="PIRSF026782">
    <property type="entry name" value="CbiD"/>
    <property type="match status" value="1"/>
</dbReference>
<dbReference type="SUPFAM" id="SSF111342">
    <property type="entry name" value="CbiD-like"/>
    <property type="match status" value="1"/>
</dbReference>
<proteinExistence type="inferred from homology"/>
<evidence type="ECO:0000255" key="1">
    <source>
        <dbReference type="HAMAP-Rule" id="MF_00787"/>
    </source>
</evidence>
<evidence type="ECO:0000305" key="2"/>
<sequence>MSQSISAQSGYTLPVFACASAIAAVETLLTSNCPDSVTLELLEPARTAEIAIEQGALLGHHRALAITRSEPGNNLDLTRHTPVWAEVEFTPGEGKLIIQGGEGIGKQLDREGQAAIYSYAQRLLRHHLQPYISGDQTLMVSLILPLGRTLATRTSNAAFGVVEGLSLLGTSGIAQPLSAPEQLAEFQQHLTSAAQQHQCLVFCLGENGLDLARQWGVPLDQMVKTANWLGSLFVAAAAVGVQEILLLGYHGKLIKLAGGIFHTHHHLADGRLEILTAQAVQAGLPYPLVQELGQAPTTEAGLKLLRHWQTEQNCPWVSKIYQAMADTVDRRSEEYVYKVSQHQLKVGSLLFDGDRQPVAISTQGQAMADKLGMTIPET</sequence>
<keyword id="KW-0169">Cobalamin biosynthesis</keyword>
<keyword id="KW-0489">Methyltransferase</keyword>
<keyword id="KW-1185">Reference proteome</keyword>
<keyword id="KW-0949">S-adenosyl-L-methionine</keyword>
<keyword id="KW-0808">Transferase</keyword>
<organism>
    <name type="scientific">Synechocystis sp. (strain ATCC 27184 / PCC 6803 / Kazusa)</name>
    <dbReference type="NCBI Taxonomy" id="1111708"/>
    <lineage>
        <taxon>Bacteria</taxon>
        <taxon>Bacillati</taxon>
        <taxon>Cyanobacteriota</taxon>
        <taxon>Cyanophyceae</taxon>
        <taxon>Synechococcales</taxon>
        <taxon>Merismopediaceae</taxon>
        <taxon>Synechocystis</taxon>
    </lineage>
</organism>
<accession>P73423</accession>
<name>CBID_SYNY3</name>
<gene>
    <name evidence="1" type="primary">cbiD</name>
    <name type="ordered locus">slr1538</name>
</gene>